<comment type="function">
    <text evidence="1">Transfers a succinyl group from succinyl-CoA to L-homoserine, forming succinyl-L-homoserine.</text>
</comment>
<comment type="catalytic activity">
    <reaction evidence="1">
        <text>L-homoserine + succinyl-CoA = O-succinyl-L-homoserine + CoA</text>
        <dbReference type="Rhea" id="RHEA:22008"/>
        <dbReference type="ChEBI" id="CHEBI:57287"/>
        <dbReference type="ChEBI" id="CHEBI:57292"/>
        <dbReference type="ChEBI" id="CHEBI:57476"/>
        <dbReference type="ChEBI" id="CHEBI:57661"/>
        <dbReference type="EC" id="2.3.1.46"/>
    </reaction>
</comment>
<comment type="pathway">
    <text evidence="1">Amino-acid biosynthesis; L-methionine biosynthesis via de novo pathway; O-succinyl-L-homoserine from L-homoserine: step 1/1.</text>
</comment>
<comment type="subunit">
    <text evidence="1">Homodimer.</text>
</comment>
<comment type="subcellular location">
    <subcellularLocation>
        <location evidence="1">Cytoplasm</location>
    </subcellularLocation>
</comment>
<comment type="similarity">
    <text evidence="1">Belongs to the MetA family.</text>
</comment>
<sequence length="309" mass="35743">MPIRVPDELPAVNFLREENVFVMTTSRASGQEIRPLKVLILNLMPKKIETENQFLRLLSNSPLQVDIQLLRIDSRESRNTPAEHLNNFYCNFEDIQEQNFDGLIVTGAPLGLVEFNDVAYWPQIKQVLEWSKDHVTSTLFVCWAVQAALNILYGIPKQTRTDKLSGVYEHHILHPHALLTRGFDDSFLAPHSRYADFPAALIRDYTDLEILAETEEGDAYLFASKDKRIAFVTGHPEYDAQTLAQEYFRDVEAGLDPDVPYNYFPHNDPQNTPRASWRSHGNLLFTNWLNYYVYQITPYDLRHMNPTLD</sequence>
<reference key="1">
    <citation type="journal article" date="2009" name="PLoS Genet.">
        <title>Organised genome dynamics in the Escherichia coli species results in highly diverse adaptive paths.</title>
        <authorList>
            <person name="Touchon M."/>
            <person name="Hoede C."/>
            <person name="Tenaillon O."/>
            <person name="Barbe V."/>
            <person name="Baeriswyl S."/>
            <person name="Bidet P."/>
            <person name="Bingen E."/>
            <person name="Bonacorsi S."/>
            <person name="Bouchier C."/>
            <person name="Bouvet O."/>
            <person name="Calteau A."/>
            <person name="Chiapello H."/>
            <person name="Clermont O."/>
            <person name="Cruveiller S."/>
            <person name="Danchin A."/>
            <person name="Diard M."/>
            <person name="Dossat C."/>
            <person name="Karoui M.E."/>
            <person name="Frapy E."/>
            <person name="Garry L."/>
            <person name="Ghigo J.M."/>
            <person name="Gilles A.M."/>
            <person name="Johnson J."/>
            <person name="Le Bouguenec C."/>
            <person name="Lescat M."/>
            <person name="Mangenot S."/>
            <person name="Martinez-Jehanne V."/>
            <person name="Matic I."/>
            <person name="Nassif X."/>
            <person name="Oztas S."/>
            <person name="Petit M.A."/>
            <person name="Pichon C."/>
            <person name="Rouy Z."/>
            <person name="Ruf C.S."/>
            <person name="Schneider D."/>
            <person name="Tourret J."/>
            <person name="Vacherie B."/>
            <person name="Vallenet D."/>
            <person name="Medigue C."/>
            <person name="Rocha E.P.C."/>
            <person name="Denamur E."/>
        </authorList>
    </citation>
    <scope>NUCLEOTIDE SEQUENCE [LARGE SCALE GENOMIC DNA]</scope>
    <source>
        <strain>S88 / ExPEC</strain>
    </source>
</reference>
<accession>B7MIZ5</accession>
<protein>
    <recommendedName>
        <fullName evidence="1">Homoserine O-succinyltransferase</fullName>
        <shortName evidence="1">HST</shortName>
        <ecNumber evidence="1">2.3.1.46</ecNumber>
    </recommendedName>
    <alternativeName>
        <fullName evidence="1">Homoserine transsuccinylase</fullName>
        <shortName evidence="1">HTS</shortName>
    </alternativeName>
</protein>
<keyword id="KW-0012">Acyltransferase</keyword>
<keyword id="KW-0028">Amino-acid biosynthesis</keyword>
<keyword id="KW-0963">Cytoplasm</keyword>
<keyword id="KW-0486">Methionine biosynthesis</keyword>
<keyword id="KW-1185">Reference proteome</keyword>
<keyword id="KW-0808">Transferase</keyword>
<evidence type="ECO:0000255" key="1">
    <source>
        <dbReference type="HAMAP-Rule" id="MF_00295"/>
    </source>
</evidence>
<organism>
    <name type="scientific">Escherichia coli O45:K1 (strain S88 / ExPEC)</name>
    <dbReference type="NCBI Taxonomy" id="585035"/>
    <lineage>
        <taxon>Bacteria</taxon>
        <taxon>Pseudomonadati</taxon>
        <taxon>Pseudomonadota</taxon>
        <taxon>Gammaproteobacteria</taxon>
        <taxon>Enterobacterales</taxon>
        <taxon>Enterobacteriaceae</taxon>
        <taxon>Escherichia</taxon>
    </lineage>
</organism>
<feature type="chain" id="PRO_1000119448" description="Homoserine O-succinyltransferase">
    <location>
        <begin position="1"/>
        <end position="309"/>
    </location>
</feature>
<feature type="active site" description="Acyl-thioester intermediate" evidence="1">
    <location>
        <position position="142"/>
    </location>
</feature>
<feature type="active site" description="Proton acceptor" evidence="1">
    <location>
        <position position="235"/>
    </location>
</feature>
<feature type="active site" evidence="1">
    <location>
        <position position="237"/>
    </location>
</feature>
<feature type="binding site" evidence="1">
    <location>
        <position position="163"/>
    </location>
    <ligand>
        <name>substrate</name>
    </ligand>
</feature>
<feature type="binding site" evidence="1">
    <location>
        <position position="192"/>
    </location>
    <ligand>
        <name>substrate</name>
    </ligand>
</feature>
<feature type="binding site" evidence="1">
    <location>
        <position position="249"/>
    </location>
    <ligand>
        <name>substrate</name>
    </ligand>
</feature>
<feature type="site" description="Important for acyl-CoA specificity" evidence="1">
    <location>
        <position position="111"/>
    </location>
</feature>
<feature type="site" description="Important for substrate specificity" evidence="1">
    <location>
        <position position="192"/>
    </location>
</feature>
<proteinExistence type="inferred from homology"/>
<name>METAS_ECO45</name>
<gene>
    <name evidence="1" type="primary">metAS</name>
    <name type="ordered locus">ECS88_4478</name>
</gene>
<dbReference type="EC" id="2.3.1.46" evidence="1"/>
<dbReference type="EMBL" id="CU928161">
    <property type="protein sequence ID" value="CAR05639.1"/>
    <property type="molecule type" value="Genomic_DNA"/>
</dbReference>
<dbReference type="SMR" id="B7MIZ5"/>
<dbReference type="KEGG" id="ecz:ECS88_4478"/>
<dbReference type="HOGENOM" id="CLU_057851_0_1_6"/>
<dbReference type="UniPathway" id="UPA00051">
    <property type="reaction ID" value="UER00075"/>
</dbReference>
<dbReference type="Proteomes" id="UP000000747">
    <property type="component" value="Chromosome"/>
</dbReference>
<dbReference type="GO" id="GO:0005737">
    <property type="term" value="C:cytoplasm"/>
    <property type="evidence" value="ECO:0007669"/>
    <property type="project" value="UniProtKB-SubCell"/>
</dbReference>
<dbReference type="GO" id="GO:0004414">
    <property type="term" value="F:homoserine O-acetyltransferase activity"/>
    <property type="evidence" value="ECO:0007669"/>
    <property type="project" value="UniProtKB-UniRule"/>
</dbReference>
<dbReference type="GO" id="GO:0008899">
    <property type="term" value="F:homoserine O-succinyltransferase activity"/>
    <property type="evidence" value="ECO:0007669"/>
    <property type="project" value="UniProtKB-EC"/>
</dbReference>
<dbReference type="GO" id="GO:0019281">
    <property type="term" value="P:L-methionine biosynthetic process from homoserine via O-succinyl-L-homoserine and cystathionine"/>
    <property type="evidence" value="ECO:0007669"/>
    <property type="project" value="InterPro"/>
</dbReference>
<dbReference type="CDD" id="cd03131">
    <property type="entry name" value="GATase1_HTS"/>
    <property type="match status" value="1"/>
</dbReference>
<dbReference type="FunFam" id="3.40.50.880:FF:000004">
    <property type="entry name" value="Homoserine O-succinyltransferase"/>
    <property type="match status" value="1"/>
</dbReference>
<dbReference type="Gene3D" id="3.40.50.880">
    <property type="match status" value="1"/>
</dbReference>
<dbReference type="HAMAP" id="MF_00295">
    <property type="entry name" value="MetA_acyltransf"/>
    <property type="match status" value="1"/>
</dbReference>
<dbReference type="InterPro" id="IPR029062">
    <property type="entry name" value="Class_I_gatase-like"/>
</dbReference>
<dbReference type="InterPro" id="IPR005697">
    <property type="entry name" value="HST_MetA"/>
</dbReference>
<dbReference type="InterPro" id="IPR033752">
    <property type="entry name" value="MetA_family"/>
</dbReference>
<dbReference type="NCBIfam" id="TIGR01001">
    <property type="entry name" value="metA"/>
    <property type="match status" value="1"/>
</dbReference>
<dbReference type="PANTHER" id="PTHR20919">
    <property type="entry name" value="HOMOSERINE O-SUCCINYLTRANSFERASE"/>
    <property type="match status" value="1"/>
</dbReference>
<dbReference type="PANTHER" id="PTHR20919:SF0">
    <property type="entry name" value="HOMOSERINE O-SUCCINYLTRANSFERASE"/>
    <property type="match status" value="1"/>
</dbReference>
<dbReference type="Pfam" id="PF04204">
    <property type="entry name" value="HTS"/>
    <property type="match status" value="1"/>
</dbReference>
<dbReference type="PIRSF" id="PIRSF000450">
    <property type="entry name" value="H_ser_succinyltr"/>
    <property type="match status" value="1"/>
</dbReference>
<dbReference type="SUPFAM" id="SSF52317">
    <property type="entry name" value="Class I glutamine amidotransferase-like"/>
    <property type="match status" value="1"/>
</dbReference>